<reference key="1">
    <citation type="journal article" date="2009" name="PLoS Genet.">
        <title>Organised genome dynamics in the Escherichia coli species results in highly diverse adaptive paths.</title>
        <authorList>
            <person name="Touchon M."/>
            <person name="Hoede C."/>
            <person name="Tenaillon O."/>
            <person name="Barbe V."/>
            <person name="Baeriswyl S."/>
            <person name="Bidet P."/>
            <person name="Bingen E."/>
            <person name="Bonacorsi S."/>
            <person name="Bouchier C."/>
            <person name="Bouvet O."/>
            <person name="Calteau A."/>
            <person name="Chiapello H."/>
            <person name="Clermont O."/>
            <person name="Cruveiller S."/>
            <person name="Danchin A."/>
            <person name="Diard M."/>
            <person name="Dossat C."/>
            <person name="Karoui M.E."/>
            <person name="Frapy E."/>
            <person name="Garry L."/>
            <person name="Ghigo J.M."/>
            <person name="Gilles A.M."/>
            <person name="Johnson J."/>
            <person name="Le Bouguenec C."/>
            <person name="Lescat M."/>
            <person name="Mangenot S."/>
            <person name="Martinez-Jehanne V."/>
            <person name="Matic I."/>
            <person name="Nassif X."/>
            <person name="Oztas S."/>
            <person name="Petit M.A."/>
            <person name="Pichon C."/>
            <person name="Rouy Z."/>
            <person name="Ruf C.S."/>
            <person name="Schneider D."/>
            <person name="Tourret J."/>
            <person name="Vacherie B."/>
            <person name="Vallenet D."/>
            <person name="Medigue C."/>
            <person name="Rocha E.P.C."/>
            <person name="Denamur E."/>
        </authorList>
    </citation>
    <scope>NUCLEOTIDE SEQUENCE [LARGE SCALE GENOMIC DNA]</scope>
    <source>
        <strain>IAI1</strain>
    </source>
</reference>
<accession>B7M2F7</accession>
<name>SYD_ECO8A</name>
<feature type="chain" id="PRO_1000198988" description="Aspartate--tRNA ligase">
    <location>
        <begin position="1"/>
        <end position="590"/>
    </location>
</feature>
<feature type="region of interest" description="Aspartate" evidence="1">
    <location>
        <begin position="195"/>
        <end position="198"/>
    </location>
</feature>
<feature type="binding site" evidence="1">
    <location>
        <position position="171"/>
    </location>
    <ligand>
        <name>L-aspartate</name>
        <dbReference type="ChEBI" id="CHEBI:29991"/>
    </ligand>
</feature>
<feature type="binding site" evidence="1">
    <location>
        <begin position="217"/>
        <end position="219"/>
    </location>
    <ligand>
        <name>ATP</name>
        <dbReference type="ChEBI" id="CHEBI:30616"/>
    </ligand>
</feature>
<feature type="binding site" evidence="1">
    <location>
        <position position="217"/>
    </location>
    <ligand>
        <name>L-aspartate</name>
        <dbReference type="ChEBI" id="CHEBI:29991"/>
    </ligand>
</feature>
<feature type="binding site" evidence="1">
    <location>
        <position position="226"/>
    </location>
    <ligand>
        <name>ATP</name>
        <dbReference type="ChEBI" id="CHEBI:30616"/>
    </ligand>
</feature>
<feature type="binding site" evidence="1">
    <location>
        <position position="448"/>
    </location>
    <ligand>
        <name>L-aspartate</name>
        <dbReference type="ChEBI" id="CHEBI:29991"/>
    </ligand>
</feature>
<feature type="binding site" evidence="1">
    <location>
        <position position="482"/>
    </location>
    <ligand>
        <name>ATP</name>
        <dbReference type="ChEBI" id="CHEBI:30616"/>
    </ligand>
</feature>
<feature type="binding site" evidence="1">
    <location>
        <position position="489"/>
    </location>
    <ligand>
        <name>L-aspartate</name>
        <dbReference type="ChEBI" id="CHEBI:29991"/>
    </ligand>
</feature>
<feature type="binding site" evidence="1">
    <location>
        <begin position="534"/>
        <end position="537"/>
    </location>
    <ligand>
        <name>ATP</name>
        <dbReference type="ChEBI" id="CHEBI:30616"/>
    </ligand>
</feature>
<organism>
    <name type="scientific">Escherichia coli O8 (strain IAI1)</name>
    <dbReference type="NCBI Taxonomy" id="585034"/>
    <lineage>
        <taxon>Bacteria</taxon>
        <taxon>Pseudomonadati</taxon>
        <taxon>Pseudomonadota</taxon>
        <taxon>Gammaproteobacteria</taxon>
        <taxon>Enterobacterales</taxon>
        <taxon>Enterobacteriaceae</taxon>
        <taxon>Escherichia</taxon>
    </lineage>
</organism>
<evidence type="ECO:0000255" key="1">
    <source>
        <dbReference type="HAMAP-Rule" id="MF_00044"/>
    </source>
</evidence>
<dbReference type="EC" id="6.1.1.12" evidence="1"/>
<dbReference type="EMBL" id="CU928160">
    <property type="protein sequence ID" value="CAQ98806.1"/>
    <property type="molecule type" value="Genomic_DNA"/>
</dbReference>
<dbReference type="RefSeq" id="WP_001258662.1">
    <property type="nucleotide sequence ID" value="NC_011741.1"/>
</dbReference>
<dbReference type="SMR" id="B7M2F7"/>
<dbReference type="GeneID" id="75202728"/>
<dbReference type="KEGG" id="ecr:ECIAI1_1953"/>
<dbReference type="HOGENOM" id="CLU_014330_3_2_6"/>
<dbReference type="GO" id="GO:0005737">
    <property type="term" value="C:cytoplasm"/>
    <property type="evidence" value="ECO:0007669"/>
    <property type="project" value="UniProtKB-SubCell"/>
</dbReference>
<dbReference type="GO" id="GO:0004815">
    <property type="term" value="F:aspartate-tRNA ligase activity"/>
    <property type="evidence" value="ECO:0007669"/>
    <property type="project" value="UniProtKB-UniRule"/>
</dbReference>
<dbReference type="GO" id="GO:0005524">
    <property type="term" value="F:ATP binding"/>
    <property type="evidence" value="ECO:0007669"/>
    <property type="project" value="UniProtKB-UniRule"/>
</dbReference>
<dbReference type="GO" id="GO:0003676">
    <property type="term" value="F:nucleic acid binding"/>
    <property type="evidence" value="ECO:0007669"/>
    <property type="project" value="InterPro"/>
</dbReference>
<dbReference type="GO" id="GO:0006422">
    <property type="term" value="P:aspartyl-tRNA aminoacylation"/>
    <property type="evidence" value="ECO:0007669"/>
    <property type="project" value="UniProtKB-UniRule"/>
</dbReference>
<dbReference type="CDD" id="cd00777">
    <property type="entry name" value="AspRS_core"/>
    <property type="match status" value="1"/>
</dbReference>
<dbReference type="CDD" id="cd04317">
    <property type="entry name" value="EcAspRS_like_N"/>
    <property type="match status" value="1"/>
</dbReference>
<dbReference type="FunFam" id="2.40.50.140:FF:000080">
    <property type="entry name" value="Aspartate--tRNA ligase"/>
    <property type="match status" value="1"/>
</dbReference>
<dbReference type="FunFam" id="3.30.1360.30:FF:000001">
    <property type="entry name" value="Aspartate--tRNA ligase"/>
    <property type="match status" value="1"/>
</dbReference>
<dbReference type="Gene3D" id="3.30.930.10">
    <property type="entry name" value="Bira Bifunctional Protein, Domain 2"/>
    <property type="match status" value="1"/>
</dbReference>
<dbReference type="Gene3D" id="3.30.1360.30">
    <property type="entry name" value="GAD-like domain"/>
    <property type="match status" value="1"/>
</dbReference>
<dbReference type="Gene3D" id="2.40.50.140">
    <property type="entry name" value="Nucleic acid-binding proteins"/>
    <property type="match status" value="1"/>
</dbReference>
<dbReference type="HAMAP" id="MF_00044">
    <property type="entry name" value="Asp_tRNA_synth_type1"/>
    <property type="match status" value="1"/>
</dbReference>
<dbReference type="InterPro" id="IPR004364">
    <property type="entry name" value="Aa-tRNA-synt_II"/>
</dbReference>
<dbReference type="InterPro" id="IPR006195">
    <property type="entry name" value="aa-tRNA-synth_II"/>
</dbReference>
<dbReference type="InterPro" id="IPR045864">
    <property type="entry name" value="aa-tRNA-synth_II/BPL/LPL"/>
</dbReference>
<dbReference type="InterPro" id="IPR004524">
    <property type="entry name" value="Asp-tRNA-ligase_1"/>
</dbReference>
<dbReference type="InterPro" id="IPR047089">
    <property type="entry name" value="Asp-tRNA-ligase_1_N"/>
</dbReference>
<dbReference type="InterPro" id="IPR002312">
    <property type="entry name" value="Asp/Asn-tRNA-synth_IIb"/>
</dbReference>
<dbReference type="InterPro" id="IPR047090">
    <property type="entry name" value="AspRS_core"/>
</dbReference>
<dbReference type="InterPro" id="IPR004115">
    <property type="entry name" value="GAD-like_sf"/>
</dbReference>
<dbReference type="InterPro" id="IPR029351">
    <property type="entry name" value="GAD_dom"/>
</dbReference>
<dbReference type="InterPro" id="IPR012340">
    <property type="entry name" value="NA-bd_OB-fold"/>
</dbReference>
<dbReference type="InterPro" id="IPR004365">
    <property type="entry name" value="NA-bd_OB_tRNA"/>
</dbReference>
<dbReference type="NCBIfam" id="TIGR00459">
    <property type="entry name" value="aspS_bact"/>
    <property type="match status" value="1"/>
</dbReference>
<dbReference type="NCBIfam" id="NF001750">
    <property type="entry name" value="PRK00476.1"/>
    <property type="match status" value="1"/>
</dbReference>
<dbReference type="PANTHER" id="PTHR22594:SF5">
    <property type="entry name" value="ASPARTATE--TRNA LIGASE, MITOCHONDRIAL"/>
    <property type="match status" value="1"/>
</dbReference>
<dbReference type="PANTHER" id="PTHR22594">
    <property type="entry name" value="ASPARTYL/LYSYL-TRNA SYNTHETASE"/>
    <property type="match status" value="1"/>
</dbReference>
<dbReference type="Pfam" id="PF02938">
    <property type="entry name" value="GAD"/>
    <property type="match status" value="1"/>
</dbReference>
<dbReference type="Pfam" id="PF00152">
    <property type="entry name" value="tRNA-synt_2"/>
    <property type="match status" value="1"/>
</dbReference>
<dbReference type="Pfam" id="PF01336">
    <property type="entry name" value="tRNA_anti-codon"/>
    <property type="match status" value="1"/>
</dbReference>
<dbReference type="PRINTS" id="PR01042">
    <property type="entry name" value="TRNASYNTHASP"/>
</dbReference>
<dbReference type="SUPFAM" id="SSF55681">
    <property type="entry name" value="Class II aaRS and biotin synthetases"/>
    <property type="match status" value="1"/>
</dbReference>
<dbReference type="SUPFAM" id="SSF55261">
    <property type="entry name" value="GAD domain-like"/>
    <property type="match status" value="1"/>
</dbReference>
<dbReference type="SUPFAM" id="SSF50249">
    <property type="entry name" value="Nucleic acid-binding proteins"/>
    <property type="match status" value="1"/>
</dbReference>
<dbReference type="PROSITE" id="PS50862">
    <property type="entry name" value="AA_TRNA_LIGASE_II"/>
    <property type="match status" value="1"/>
</dbReference>
<sequence>MRTEYCGQLRLSHVGQQVTLCGWVNRRRDLGSLIFIDMRDREGIVQVFFDPDRADALKLASELRNEFCIQVTGTVRARDEKNINRDMATGEIEVLASSLTIINRADVLPLDSNHVNTEEARLKYRYLDLRRPEMAQRLKTRAKITSLVRRFMDDHGFLDIETPMLTKATPEGARDYLVPSRVHKGKFYALPQSPQLFKQLLMMSGFDRYYQIVKCFRDEDLRADRQPEFTQIDVETSFMTAPQVREVMEALVRHLWLEVKGVDLGDFPVMTFAEAERRYGSDKPDLRNPMELTDVADLLKSVEFAVFAGPANDPKGRVAALRVPGGASLTRKQIDEYGNFVKIYGAKGLAYIKVNERAKGLEGINSPVAKFLNAEIIEAILDRTAAQDGDMIFFGADNKKIVADAMGALRLKVGKDLGLTDESKWAPLWVIDFPMFEDDGEGGLTAMHHPFTSPKDMTAAELKAAPENAVANAYDMVINGYEVGGGSVRIHNGDMQQTVFGILGINEEEQREKFGFLLDALKYGTPPHAGLAFGLDRLTMLLTGTDNIRDVIAFPKTTAAACLMTEAPSFANPTALAELSIQVVKKAENN</sequence>
<gene>
    <name evidence="1" type="primary">aspS</name>
    <name type="ordered locus">ECIAI1_1953</name>
</gene>
<comment type="function">
    <text evidence="1">Catalyzes the attachment of L-aspartate to tRNA(Asp) in a two-step reaction: L-aspartate is first activated by ATP to form Asp-AMP and then transferred to the acceptor end of tRNA(Asp).</text>
</comment>
<comment type="catalytic activity">
    <reaction evidence="1">
        <text>tRNA(Asp) + L-aspartate + ATP = L-aspartyl-tRNA(Asp) + AMP + diphosphate</text>
        <dbReference type="Rhea" id="RHEA:19649"/>
        <dbReference type="Rhea" id="RHEA-COMP:9660"/>
        <dbReference type="Rhea" id="RHEA-COMP:9678"/>
        <dbReference type="ChEBI" id="CHEBI:29991"/>
        <dbReference type="ChEBI" id="CHEBI:30616"/>
        <dbReference type="ChEBI" id="CHEBI:33019"/>
        <dbReference type="ChEBI" id="CHEBI:78442"/>
        <dbReference type="ChEBI" id="CHEBI:78516"/>
        <dbReference type="ChEBI" id="CHEBI:456215"/>
        <dbReference type="EC" id="6.1.1.12"/>
    </reaction>
</comment>
<comment type="subunit">
    <text evidence="1">Homodimer.</text>
</comment>
<comment type="subcellular location">
    <subcellularLocation>
        <location evidence="1">Cytoplasm</location>
    </subcellularLocation>
</comment>
<comment type="similarity">
    <text evidence="1">Belongs to the class-II aminoacyl-tRNA synthetase family. Type 1 subfamily.</text>
</comment>
<protein>
    <recommendedName>
        <fullName evidence="1">Aspartate--tRNA ligase</fullName>
        <ecNumber evidence="1">6.1.1.12</ecNumber>
    </recommendedName>
    <alternativeName>
        <fullName evidence="1">Aspartyl-tRNA synthetase</fullName>
        <shortName evidence="1">AspRS</shortName>
    </alternativeName>
</protein>
<keyword id="KW-0030">Aminoacyl-tRNA synthetase</keyword>
<keyword id="KW-0067">ATP-binding</keyword>
<keyword id="KW-0963">Cytoplasm</keyword>
<keyword id="KW-0436">Ligase</keyword>
<keyword id="KW-0547">Nucleotide-binding</keyword>
<keyword id="KW-0648">Protein biosynthesis</keyword>
<proteinExistence type="inferred from homology"/>